<keyword id="KW-0175">Coiled coil</keyword>
<keyword id="KW-0963">Cytoplasm</keyword>
<keyword id="KW-0597">Phosphoprotein</keyword>
<keyword id="KW-1185">Reference proteome</keyword>
<evidence type="ECO:0000250" key="1"/>
<evidence type="ECO:0000250" key="2">
    <source>
        <dbReference type="UniProtKB" id="Q8BWR8"/>
    </source>
</evidence>
<evidence type="ECO:0000255" key="3">
    <source>
        <dbReference type="PROSITE-ProRule" id="PRU00143"/>
    </source>
</evidence>
<evidence type="ECO:0000255" key="4">
    <source>
        <dbReference type="PROSITE-ProRule" id="PRU00526"/>
    </source>
</evidence>
<evidence type="ECO:0000255" key="5">
    <source>
        <dbReference type="PROSITE-ProRule" id="PRU01207"/>
    </source>
</evidence>
<evidence type="ECO:0000269" key="6">
    <source>
    </source>
</evidence>
<evidence type="ECO:0000305" key="7"/>
<feature type="chain" id="PRO_0000218897" description="Rhophilin-2">
    <location>
        <begin position="1"/>
        <end position="686"/>
    </location>
</feature>
<feature type="domain" description="REM-1" evidence="5">
    <location>
        <begin position="26"/>
        <end position="100"/>
    </location>
</feature>
<feature type="domain" description="BRO1" evidence="4">
    <location>
        <begin position="111"/>
        <end position="460"/>
    </location>
</feature>
<feature type="domain" description="PDZ" evidence="3">
    <location>
        <begin position="515"/>
        <end position="593"/>
    </location>
</feature>
<feature type="region of interest" description="Interaction with Rho" evidence="1">
    <location>
        <begin position="46"/>
        <end position="66"/>
    </location>
</feature>
<feature type="modified residue" description="Phosphothreonine" evidence="2">
    <location>
        <position position="655"/>
    </location>
</feature>
<accession>Q8HXG3</accession>
<protein>
    <recommendedName>
        <fullName>Rhophilin-2</fullName>
    </recommendedName>
    <alternativeName>
        <fullName>76 kDa RhoB effector protein</fullName>
    </alternativeName>
    <alternativeName>
        <fullName>GTP-Rho-binding protein 2</fullName>
    </alternativeName>
    <alternativeName>
        <fullName>p76RBE</fullName>
    </alternativeName>
</protein>
<proteinExistence type="evidence at transcript level"/>
<gene>
    <name type="primary">RHPN2</name>
</gene>
<sequence length="686" mass="76865">MTDALLPAAPQPLEKESDGYFRKGCNPLAQTGRSKLQNQRAALNQQILKAVRMRTGAENLLKVATNHKVREQVRLELSFVNSDLQMLKEELEGLNISVGVYQSTEEAFTVPLIPLGLKETKDIDFSVVLKDFILEHYSEDSYLYEDEIADLMDLRQACRTPSRDEAGVELLMSYFIQLGFVESRFFPPTRQMGILFTWYDSLTGVPVSQQNLLLEKASILFNIGALYTQIGTRCNRRTQAGLDGAVDAFQRAAGVLHHLKETFTHTPSYDMSPAMLSVLVKMMLAQAQENVFEKICLPGIRNEFFVLVKVAQEAAKVGEVYRQLHTAMSQAPVKENIPYSWASLVCVKAHHYAALAHYFAATLLIDHQLKPGADEDHQEKCLSQLYDHMPEGLTPLATLKSGHQRRQLGKSHLRRAVAHHEESVREASLCKKLRNIEVLQDVLSVAHERSRLKYAQHQDDDDLLNLIDAPDIISKTEQEVEIILPQFSKVTATDFFQKLGPLSVFSANKRWTPPRSIHFTAEEGDLGFTLRGNSPVQVHFLDPHCSAALAGAKEGDYIVSIQDVDCKWLTVSEVMKLLKACGRDGVEMKVVSLLDFTSSMHNKCATYSVGMQKTYSMICLAIDDDDKTDKTKKISKKLSFLSWGTDKNRVKSASTLCLPSVGVARPQVKKKLPSPFSLLNSDSSLY</sequence>
<dbReference type="EMBL" id="AJ347749">
    <property type="protein sequence ID" value="CAC87938.1"/>
    <property type="molecule type" value="mRNA"/>
</dbReference>
<dbReference type="RefSeq" id="NP_001003008.1">
    <property type="nucleotide sequence ID" value="NM_001003008.1"/>
</dbReference>
<dbReference type="SMR" id="Q8HXG3"/>
<dbReference type="FunCoup" id="Q8HXG3">
    <property type="interactions" value="86"/>
</dbReference>
<dbReference type="STRING" id="9615.ENSCAFP00000011084"/>
<dbReference type="PaxDb" id="9612-ENSCAFP00000011084"/>
<dbReference type="GeneID" id="403518"/>
<dbReference type="KEGG" id="cfa:403518"/>
<dbReference type="CTD" id="85415"/>
<dbReference type="eggNOG" id="KOG2220">
    <property type="taxonomic scope" value="Eukaryota"/>
</dbReference>
<dbReference type="InParanoid" id="Q8HXG3"/>
<dbReference type="OrthoDB" id="64867at2759"/>
<dbReference type="Proteomes" id="UP000002254">
    <property type="component" value="Unplaced"/>
</dbReference>
<dbReference type="Proteomes" id="UP000694429">
    <property type="component" value="Unplaced"/>
</dbReference>
<dbReference type="Proteomes" id="UP000694542">
    <property type="component" value="Unplaced"/>
</dbReference>
<dbReference type="Proteomes" id="UP000805418">
    <property type="component" value="Unplaced"/>
</dbReference>
<dbReference type="GO" id="GO:0005829">
    <property type="term" value="C:cytosol"/>
    <property type="evidence" value="ECO:0000304"/>
    <property type="project" value="Reactome"/>
</dbReference>
<dbReference type="GO" id="GO:0048471">
    <property type="term" value="C:perinuclear region of cytoplasm"/>
    <property type="evidence" value="ECO:0007669"/>
    <property type="project" value="UniProtKB-SubCell"/>
</dbReference>
<dbReference type="GO" id="GO:0051497">
    <property type="term" value="P:negative regulation of stress fiber assembly"/>
    <property type="evidence" value="ECO:0000318"/>
    <property type="project" value="GO_Central"/>
</dbReference>
<dbReference type="GO" id="GO:0007165">
    <property type="term" value="P:signal transduction"/>
    <property type="evidence" value="ECO:0007669"/>
    <property type="project" value="InterPro"/>
</dbReference>
<dbReference type="CDD" id="cd09249">
    <property type="entry name" value="BRO1_Rhophilin_2"/>
    <property type="match status" value="1"/>
</dbReference>
<dbReference type="CDD" id="cd11634">
    <property type="entry name" value="HR1_Rhophilin-2"/>
    <property type="match status" value="1"/>
</dbReference>
<dbReference type="CDD" id="cd06712">
    <property type="entry name" value="PDZ_rhophilin-like"/>
    <property type="match status" value="1"/>
</dbReference>
<dbReference type="FunFam" id="1.10.287.160:FF:000007">
    <property type="entry name" value="Rhophilin-2"/>
    <property type="match status" value="1"/>
</dbReference>
<dbReference type="FunFam" id="1.25.40.280:FF:000003">
    <property type="entry name" value="RHPN1 isoform 1"/>
    <property type="match status" value="1"/>
</dbReference>
<dbReference type="FunFam" id="2.30.42.10:FF:000160">
    <property type="entry name" value="RHPN1 isoform 1"/>
    <property type="match status" value="1"/>
</dbReference>
<dbReference type="Gene3D" id="2.30.42.10">
    <property type="match status" value="1"/>
</dbReference>
<dbReference type="Gene3D" id="1.25.40.280">
    <property type="entry name" value="alix/aip1 like domains"/>
    <property type="match status" value="1"/>
</dbReference>
<dbReference type="Gene3D" id="1.10.287.160">
    <property type="entry name" value="HR1 repeat"/>
    <property type="match status" value="1"/>
</dbReference>
<dbReference type="InterPro" id="IPR004328">
    <property type="entry name" value="BRO1_dom"/>
</dbReference>
<dbReference type="InterPro" id="IPR038499">
    <property type="entry name" value="BRO1_sf"/>
</dbReference>
<dbReference type="InterPro" id="IPR011072">
    <property type="entry name" value="HR1_rho-bd"/>
</dbReference>
<dbReference type="InterPro" id="IPR036274">
    <property type="entry name" value="HR1_rpt_sf"/>
</dbReference>
<dbReference type="InterPro" id="IPR001478">
    <property type="entry name" value="PDZ"/>
</dbReference>
<dbReference type="InterPro" id="IPR036034">
    <property type="entry name" value="PDZ_sf"/>
</dbReference>
<dbReference type="InterPro" id="IPR049603">
    <property type="entry name" value="Rhophilin-2_HR1"/>
</dbReference>
<dbReference type="InterPro" id="IPR047138">
    <property type="entry name" value="RHPN1_2"/>
</dbReference>
<dbReference type="InterPro" id="IPR047902">
    <property type="entry name" value="RHPN2_BRO1"/>
</dbReference>
<dbReference type="PANTHER" id="PTHR23031">
    <property type="entry name" value="RHOPHILIN"/>
    <property type="match status" value="1"/>
</dbReference>
<dbReference type="PANTHER" id="PTHR23031:SF5">
    <property type="entry name" value="RHOPHILIN-2-RELATED"/>
    <property type="match status" value="1"/>
</dbReference>
<dbReference type="Pfam" id="PF03097">
    <property type="entry name" value="BRO1"/>
    <property type="match status" value="1"/>
</dbReference>
<dbReference type="Pfam" id="PF02185">
    <property type="entry name" value="HR1"/>
    <property type="match status" value="1"/>
</dbReference>
<dbReference type="SMART" id="SM01041">
    <property type="entry name" value="BRO1"/>
    <property type="match status" value="1"/>
</dbReference>
<dbReference type="SMART" id="SM00742">
    <property type="entry name" value="Hr1"/>
    <property type="match status" value="1"/>
</dbReference>
<dbReference type="SMART" id="SM00228">
    <property type="entry name" value="PDZ"/>
    <property type="match status" value="1"/>
</dbReference>
<dbReference type="SUPFAM" id="SSF46585">
    <property type="entry name" value="HR1 repeat"/>
    <property type="match status" value="1"/>
</dbReference>
<dbReference type="SUPFAM" id="SSF50156">
    <property type="entry name" value="PDZ domain-like"/>
    <property type="match status" value="1"/>
</dbReference>
<dbReference type="PROSITE" id="PS51180">
    <property type="entry name" value="BRO1"/>
    <property type="match status" value="1"/>
</dbReference>
<dbReference type="PROSITE" id="PS50106">
    <property type="entry name" value="PDZ"/>
    <property type="match status" value="1"/>
</dbReference>
<dbReference type="PROSITE" id="PS51860">
    <property type="entry name" value="REM_1"/>
    <property type="match status" value="1"/>
</dbReference>
<organism>
    <name type="scientific">Canis lupus familiaris</name>
    <name type="common">Dog</name>
    <name type="synonym">Canis familiaris</name>
    <dbReference type="NCBI Taxonomy" id="9615"/>
    <lineage>
        <taxon>Eukaryota</taxon>
        <taxon>Metazoa</taxon>
        <taxon>Chordata</taxon>
        <taxon>Craniata</taxon>
        <taxon>Vertebrata</taxon>
        <taxon>Euteleostomi</taxon>
        <taxon>Mammalia</taxon>
        <taxon>Eutheria</taxon>
        <taxon>Laurasiatheria</taxon>
        <taxon>Carnivora</taxon>
        <taxon>Caniformia</taxon>
        <taxon>Canidae</taxon>
        <taxon>Canis</taxon>
    </lineage>
</organism>
<name>RHPN2_CANLF</name>
<comment type="function">
    <text evidence="1">Binds specifically to GTP-Rho. May function in a Rho pathway to limit stress fiber formation and/or increase the turnover of F-actin structures in the absence of high levels of RhoA activity (By similarity).</text>
</comment>
<comment type="subunit">
    <text evidence="1">Interacts with GTP-bound RhoA and RhoB. Interacts with both GTP- and GDP-bound RhoA. Interacts with KRT18 (By similarity).</text>
</comment>
<comment type="subcellular location">
    <subcellularLocation>
        <location evidence="1">Cytoplasm</location>
        <location evidence="1">Perinuclear region</location>
    </subcellularLocation>
</comment>
<comment type="tissue specificity">
    <text evidence="6">Mainly expressed in thyroid.</text>
</comment>
<comment type="induction">
    <text evidence="6">By thyrotropin (TSH).</text>
</comment>
<comment type="similarity">
    <text evidence="7">Belongs to the RHPN family.</text>
</comment>
<reference key="1">
    <citation type="journal article" date="2002" name="Eur. J. Biochem.">
        <title>Identification and characterization of a novel activated RhoB binding protein containing a PDZ domain whose expression is specifically modulated in thyroid cells by cAMP.</title>
        <authorList>
            <person name="Mircescu H."/>
            <person name="Steuve S."/>
            <person name="Savonet V."/>
            <person name="Degraef C."/>
            <person name="Mellor H."/>
            <person name="Dumont J.E."/>
            <person name="Maenhaut C."/>
            <person name="Pirson I."/>
        </authorList>
    </citation>
    <scope>NUCLEOTIDE SEQUENCE [MRNA]</scope>
    <source>
        <tissue>Thyroid</tissue>
    </source>
</reference>
<reference key="2">
    <citation type="journal article" date="1996" name="J. Biol. Chem.">
        <title>Identification and characterization of novel genes modulated in the thyroid of dogs treated with methimazole and propylthiouracil.</title>
        <authorList>
            <person name="Wilkin F."/>
            <person name="Savonet V."/>
            <person name="Radulescu A."/>
            <person name="Petermans J."/>
            <person name="Dumont J.E."/>
            <person name="Maenhaut C."/>
        </authorList>
    </citation>
    <scope>IDENTIFICATION</scope>
    <scope>TISSUE SPECIFICITY</scope>
    <scope>INDUCTION</scope>
</reference>